<organism>
    <name type="scientific">Pseudomonas putida (strain W619)</name>
    <dbReference type="NCBI Taxonomy" id="390235"/>
    <lineage>
        <taxon>Bacteria</taxon>
        <taxon>Pseudomonadati</taxon>
        <taxon>Pseudomonadota</taxon>
        <taxon>Gammaproteobacteria</taxon>
        <taxon>Pseudomonadales</taxon>
        <taxon>Pseudomonadaceae</taxon>
        <taxon>Pseudomonas</taxon>
    </lineage>
</organism>
<feature type="chain" id="PRO_1000145747" description="Glutamyl-Q tRNA(Asp) synthetase">
    <location>
        <begin position="1"/>
        <end position="295"/>
    </location>
</feature>
<feature type="short sequence motif" description="'HIGH' region">
    <location>
        <begin position="12"/>
        <end position="22"/>
    </location>
</feature>
<feature type="short sequence motif" description="'KMSKS' region">
    <location>
        <begin position="228"/>
        <end position="232"/>
    </location>
</feature>
<feature type="binding site" evidence="1">
    <location>
        <begin position="9"/>
        <end position="13"/>
    </location>
    <ligand>
        <name>L-glutamate</name>
        <dbReference type="ChEBI" id="CHEBI:29985"/>
    </ligand>
</feature>
<feature type="binding site" evidence="1">
    <location>
        <position position="45"/>
    </location>
    <ligand>
        <name>L-glutamate</name>
        <dbReference type="ChEBI" id="CHEBI:29985"/>
    </ligand>
</feature>
<feature type="binding site" evidence="1">
    <location>
        <position position="101"/>
    </location>
    <ligand>
        <name>Zn(2+)</name>
        <dbReference type="ChEBI" id="CHEBI:29105"/>
    </ligand>
</feature>
<feature type="binding site" evidence="1">
    <location>
        <position position="103"/>
    </location>
    <ligand>
        <name>Zn(2+)</name>
        <dbReference type="ChEBI" id="CHEBI:29105"/>
    </ligand>
</feature>
<feature type="binding site" evidence="1">
    <location>
        <position position="115"/>
    </location>
    <ligand>
        <name>Zn(2+)</name>
        <dbReference type="ChEBI" id="CHEBI:29105"/>
    </ligand>
</feature>
<feature type="binding site" evidence="1">
    <location>
        <position position="119"/>
    </location>
    <ligand>
        <name>Zn(2+)</name>
        <dbReference type="ChEBI" id="CHEBI:29105"/>
    </ligand>
</feature>
<feature type="binding site" evidence="1">
    <location>
        <position position="172"/>
    </location>
    <ligand>
        <name>L-glutamate</name>
        <dbReference type="ChEBI" id="CHEBI:29985"/>
    </ligand>
</feature>
<feature type="binding site" evidence="1">
    <location>
        <position position="190"/>
    </location>
    <ligand>
        <name>L-glutamate</name>
        <dbReference type="ChEBI" id="CHEBI:29985"/>
    </ligand>
</feature>
<feature type="binding site" evidence="1">
    <location>
        <position position="231"/>
    </location>
    <ligand>
        <name>ATP</name>
        <dbReference type="ChEBI" id="CHEBI:30616"/>
    </ligand>
</feature>
<reference key="1">
    <citation type="submission" date="2008-02" db="EMBL/GenBank/DDBJ databases">
        <title>Complete sequence of Pseudomonas putida W619.</title>
        <authorList>
            <person name="Copeland A."/>
            <person name="Lucas S."/>
            <person name="Lapidus A."/>
            <person name="Barry K."/>
            <person name="Detter J.C."/>
            <person name="Glavina del Rio T."/>
            <person name="Dalin E."/>
            <person name="Tice H."/>
            <person name="Pitluck S."/>
            <person name="Chain P."/>
            <person name="Malfatti S."/>
            <person name="Shin M."/>
            <person name="Vergez L."/>
            <person name="Schmutz J."/>
            <person name="Larimer F."/>
            <person name="Land M."/>
            <person name="Hauser L."/>
            <person name="Kyrpides N."/>
            <person name="Kim E."/>
            <person name="Taghavi S."/>
            <person name="Vangronsveld D."/>
            <person name="van der Lelie D."/>
            <person name="Richardson P."/>
        </authorList>
    </citation>
    <scope>NUCLEOTIDE SEQUENCE [LARGE SCALE GENOMIC DNA]</scope>
    <source>
        <strain>W619</strain>
    </source>
</reference>
<proteinExistence type="inferred from homology"/>
<accession>B1J2C8</accession>
<keyword id="KW-0030">Aminoacyl-tRNA synthetase</keyword>
<keyword id="KW-0067">ATP-binding</keyword>
<keyword id="KW-0436">Ligase</keyword>
<keyword id="KW-0479">Metal-binding</keyword>
<keyword id="KW-0547">Nucleotide-binding</keyword>
<keyword id="KW-0862">Zinc</keyword>
<gene>
    <name evidence="1" type="primary">gluQ</name>
    <name type="ordered locus">PputW619_0740</name>
</gene>
<name>GLUQ_PSEPW</name>
<evidence type="ECO:0000255" key="1">
    <source>
        <dbReference type="HAMAP-Rule" id="MF_01428"/>
    </source>
</evidence>
<protein>
    <recommendedName>
        <fullName evidence="1">Glutamyl-Q tRNA(Asp) synthetase</fullName>
        <shortName evidence="1">Glu-Q-RSs</shortName>
        <ecNumber evidence="1">6.1.1.-</ecNumber>
    </recommendedName>
</protein>
<comment type="function">
    <text evidence="1">Catalyzes the tRNA-independent activation of glutamate in presence of ATP and the subsequent transfer of glutamate onto a tRNA(Asp). Glutamate is transferred on the 2-amino-5-(4,5-dihydroxy-2-cyclopenten-1-yl) moiety of the queuosine in the wobble position of the QUC anticodon.</text>
</comment>
<comment type="cofactor">
    <cofactor evidence="1">
        <name>Zn(2+)</name>
        <dbReference type="ChEBI" id="CHEBI:29105"/>
    </cofactor>
    <text evidence="1">Binds 1 zinc ion per subunit.</text>
</comment>
<comment type="similarity">
    <text evidence="1">Belongs to the class-I aminoacyl-tRNA synthetase family. GluQ subfamily.</text>
</comment>
<dbReference type="EC" id="6.1.1.-" evidence="1"/>
<dbReference type="EMBL" id="CP000949">
    <property type="protein sequence ID" value="ACA71245.1"/>
    <property type="molecule type" value="Genomic_DNA"/>
</dbReference>
<dbReference type="SMR" id="B1J2C8"/>
<dbReference type="STRING" id="390235.PputW619_0740"/>
<dbReference type="KEGG" id="ppw:PputW619_0740"/>
<dbReference type="eggNOG" id="COG0008">
    <property type="taxonomic scope" value="Bacteria"/>
</dbReference>
<dbReference type="HOGENOM" id="CLU_015768_0_1_6"/>
<dbReference type="OrthoDB" id="9807503at2"/>
<dbReference type="GO" id="GO:0005829">
    <property type="term" value="C:cytosol"/>
    <property type="evidence" value="ECO:0007669"/>
    <property type="project" value="TreeGrafter"/>
</dbReference>
<dbReference type="GO" id="GO:0005524">
    <property type="term" value="F:ATP binding"/>
    <property type="evidence" value="ECO:0007669"/>
    <property type="project" value="UniProtKB-KW"/>
</dbReference>
<dbReference type="GO" id="GO:0004818">
    <property type="term" value="F:glutamate-tRNA ligase activity"/>
    <property type="evidence" value="ECO:0007669"/>
    <property type="project" value="TreeGrafter"/>
</dbReference>
<dbReference type="GO" id="GO:0008270">
    <property type="term" value="F:zinc ion binding"/>
    <property type="evidence" value="ECO:0007669"/>
    <property type="project" value="UniProtKB-UniRule"/>
</dbReference>
<dbReference type="GO" id="GO:0006424">
    <property type="term" value="P:glutamyl-tRNA aminoacylation"/>
    <property type="evidence" value="ECO:0007669"/>
    <property type="project" value="InterPro"/>
</dbReference>
<dbReference type="GO" id="GO:0006400">
    <property type="term" value="P:tRNA modification"/>
    <property type="evidence" value="ECO:0007669"/>
    <property type="project" value="InterPro"/>
</dbReference>
<dbReference type="FunFam" id="3.40.50.620:FF:000093">
    <property type="entry name" value="Glutamyl-Q tRNA(Asp) synthetase"/>
    <property type="match status" value="1"/>
</dbReference>
<dbReference type="Gene3D" id="3.90.800.10">
    <property type="entry name" value="Glutamyl-tRNA Synthetase, Domain 3"/>
    <property type="match status" value="1"/>
</dbReference>
<dbReference type="Gene3D" id="3.40.50.620">
    <property type="entry name" value="HUPs"/>
    <property type="match status" value="1"/>
</dbReference>
<dbReference type="HAMAP" id="MF_01428">
    <property type="entry name" value="Glu_Q_tRNA_synth"/>
    <property type="match status" value="1"/>
</dbReference>
<dbReference type="InterPro" id="IPR022380">
    <property type="entry name" value="Glu-Q_tRNA(Asp)_Synthase"/>
</dbReference>
<dbReference type="InterPro" id="IPR000924">
    <property type="entry name" value="Glu/Gln-tRNA-synth"/>
</dbReference>
<dbReference type="InterPro" id="IPR020058">
    <property type="entry name" value="Glu/Gln-tRNA-synth_Ib_cat-dom"/>
</dbReference>
<dbReference type="InterPro" id="IPR049940">
    <property type="entry name" value="GluQ/Sye"/>
</dbReference>
<dbReference type="InterPro" id="IPR014729">
    <property type="entry name" value="Rossmann-like_a/b/a_fold"/>
</dbReference>
<dbReference type="NCBIfam" id="NF004314">
    <property type="entry name" value="PRK05710.1-3"/>
    <property type="match status" value="1"/>
</dbReference>
<dbReference type="NCBIfam" id="TIGR03838">
    <property type="entry name" value="queuosine_YadB"/>
    <property type="match status" value="1"/>
</dbReference>
<dbReference type="PANTHER" id="PTHR43311">
    <property type="entry name" value="GLUTAMATE--TRNA LIGASE"/>
    <property type="match status" value="1"/>
</dbReference>
<dbReference type="PANTHER" id="PTHR43311:SF1">
    <property type="entry name" value="GLUTAMYL-Q TRNA(ASP) SYNTHETASE"/>
    <property type="match status" value="1"/>
</dbReference>
<dbReference type="Pfam" id="PF00749">
    <property type="entry name" value="tRNA-synt_1c"/>
    <property type="match status" value="1"/>
</dbReference>
<dbReference type="PRINTS" id="PR00987">
    <property type="entry name" value="TRNASYNTHGLU"/>
</dbReference>
<dbReference type="SUPFAM" id="SSF52374">
    <property type="entry name" value="Nucleotidylyl transferase"/>
    <property type="match status" value="1"/>
</dbReference>
<sequence>MNDSRYIGRFAPTPSGFLHFGSLVAALASWLDARAVNGRWLLRVEDTDPPREMPGARDAILQTLERYGLEWDGEVVFQSQRHPAYAQVVDRMFNMGLAYACTCSRKQLEGYNGIYPGFCRNAGHAREGAAIRLRVPELIYRFTDRVQGTFQQHLGREVGDFVIQRRDGLYAYQLAVVLDDAWQGVTDIVRGADLLDNTPRQLYLQELLGFSQPRYLHIPLIVQPDGHKLGKSYRSPPLEASQATPLLLRALRALGQEADPQLLTATPAEVLAVARQRWQPEAIAQRTTVPEADLY</sequence>